<sequence length="481" mass="56156">MAVERKKWSENFSEWYNELIETAGIQDKRYPVKGMNVWLPYGLKIMRNIERFIHAEMERTGHDEVLFPALIPETEFQKEAEHIKGFEGEVYWVTHAGLEPLDVRLILRPTSETAMYSMFSLWIRSHADLPFKIYQIVNVYRYETKHTRPLIRVREISRFFEAHTAHDSYEDAERQIKEDLEIFDNLARFLALPYIISKRPEWDKFPGAYYSLGAEVMMPDGRTLQIGTMHNYRQNFAKAYNIQYETETGDHEYVHQTTFGMSERLLAAVIAIHGDDRGMVLPPTIAPIQVVIVPIPKKDSEADVFAYAREIAEELRTAGIRVHVDERDIRPGRKYYDWELKGVPLRIEVGPRDVEGKKAVLARRDTLEKITVERDNIVEEVRKTLDAIHENLYQRAKEFLESHIKRVDTIEEAKAVFEDRRGIVEIPWCGEEECGLRMEEELDAKMLGIPYPEEKAKAPEGKKCPVCGREAKFIARFARTY</sequence>
<organism>
    <name type="scientific">Thermococcus kodakarensis (strain ATCC BAA-918 / JCM 12380 / KOD1)</name>
    <name type="common">Pyrococcus kodakaraensis (strain KOD1)</name>
    <dbReference type="NCBI Taxonomy" id="69014"/>
    <lineage>
        <taxon>Archaea</taxon>
        <taxon>Methanobacteriati</taxon>
        <taxon>Methanobacteriota</taxon>
        <taxon>Thermococci</taxon>
        <taxon>Thermococcales</taxon>
        <taxon>Thermococcaceae</taxon>
        <taxon>Thermococcus</taxon>
    </lineage>
</organism>
<comment type="function">
    <text evidence="1">Catalyzes the attachment of proline to tRNA(Pro) in a two-step reaction: proline is first activated by ATP to form Pro-AMP and then transferred to the acceptor end of tRNA(Pro).</text>
</comment>
<comment type="catalytic activity">
    <reaction evidence="1">
        <text>tRNA(Pro) + L-proline + ATP = L-prolyl-tRNA(Pro) + AMP + diphosphate</text>
        <dbReference type="Rhea" id="RHEA:14305"/>
        <dbReference type="Rhea" id="RHEA-COMP:9700"/>
        <dbReference type="Rhea" id="RHEA-COMP:9702"/>
        <dbReference type="ChEBI" id="CHEBI:30616"/>
        <dbReference type="ChEBI" id="CHEBI:33019"/>
        <dbReference type="ChEBI" id="CHEBI:60039"/>
        <dbReference type="ChEBI" id="CHEBI:78442"/>
        <dbReference type="ChEBI" id="CHEBI:78532"/>
        <dbReference type="ChEBI" id="CHEBI:456215"/>
        <dbReference type="EC" id="6.1.1.15"/>
    </reaction>
</comment>
<comment type="subunit">
    <text evidence="1">Homodimer.</text>
</comment>
<comment type="subcellular location">
    <subcellularLocation>
        <location evidence="1">Cytoplasm</location>
    </subcellularLocation>
</comment>
<comment type="domain">
    <text evidence="1">Consists of three domains: the N-terminal catalytic domain, the anticodon-binding domain and the C-terminal extension.</text>
</comment>
<comment type="similarity">
    <text evidence="1">Belongs to the class-II aminoacyl-tRNA synthetase family. ProS type 3 subfamily.</text>
</comment>
<keyword id="KW-0030">Aminoacyl-tRNA synthetase</keyword>
<keyword id="KW-0067">ATP-binding</keyword>
<keyword id="KW-0963">Cytoplasm</keyword>
<keyword id="KW-0436">Ligase</keyword>
<keyword id="KW-0547">Nucleotide-binding</keyword>
<keyword id="KW-0648">Protein biosynthesis</keyword>
<keyword id="KW-1185">Reference proteome</keyword>
<dbReference type="EC" id="6.1.1.15" evidence="1"/>
<dbReference type="EMBL" id="AP006878">
    <property type="protein sequence ID" value="BAD84739.1"/>
    <property type="molecule type" value="Genomic_DNA"/>
</dbReference>
<dbReference type="RefSeq" id="WP_011249505.1">
    <property type="nucleotide sequence ID" value="NC_006624.1"/>
</dbReference>
<dbReference type="SMR" id="Q5JF49"/>
<dbReference type="FunCoup" id="Q5JF49">
    <property type="interactions" value="132"/>
</dbReference>
<dbReference type="IntAct" id="Q5JF49">
    <property type="interactions" value="1"/>
</dbReference>
<dbReference type="MINT" id="Q5JF49"/>
<dbReference type="STRING" id="69014.TK0550"/>
<dbReference type="EnsemblBacteria" id="BAD84739">
    <property type="protein sequence ID" value="BAD84739"/>
    <property type="gene ID" value="TK0550"/>
</dbReference>
<dbReference type="GeneID" id="78447064"/>
<dbReference type="KEGG" id="tko:TK0550"/>
<dbReference type="PATRIC" id="fig|69014.16.peg.538"/>
<dbReference type="eggNOG" id="arCOG00402">
    <property type="taxonomic scope" value="Archaea"/>
</dbReference>
<dbReference type="HOGENOM" id="CLU_001882_4_2_2"/>
<dbReference type="InParanoid" id="Q5JF49"/>
<dbReference type="OrthoDB" id="7375at2157"/>
<dbReference type="PhylomeDB" id="Q5JF49"/>
<dbReference type="Proteomes" id="UP000000536">
    <property type="component" value="Chromosome"/>
</dbReference>
<dbReference type="GO" id="GO:0005737">
    <property type="term" value="C:cytoplasm"/>
    <property type="evidence" value="ECO:0007669"/>
    <property type="project" value="UniProtKB-SubCell"/>
</dbReference>
<dbReference type="GO" id="GO:0005524">
    <property type="term" value="F:ATP binding"/>
    <property type="evidence" value="ECO:0007669"/>
    <property type="project" value="UniProtKB-UniRule"/>
</dbReference>
<dbReference type="GO" id="GO:0004827">
    <property type="term" value="F:proline-tRNA ligase activity"/>
    <property type="evidence" value="ECO:0000318"/>
    <property type="project" value="GO_Central"/>
</dbReference>
<dbReference type="GO" id="GO:0006433">
    <property type="term" value="P:prolyl-tRNA aminoacylation"/>
    <property type="evidence" value="ECO:0000318"/>
    <property type="project" value="GO_Central"/>
</dbReference>
<dbReference type="CDD" id="cd00862">
    <property type="entry name" value="ProRS_anticodon_zinc"/>
    <property type="match status" value="1"/>
</dbReference>
<dbReference type="CDD" id="cd00778">
    <property type="entry name" value="ProRS_core_arch_euk"/>
    <property type="match status" value="1"/>
</dbReference>
<dbReference type="FunFam" id="3.40.50.800:FF:000005">
    <property type="entry name" value="bifunctional glutamate/proline--tRNA ligase"/>
    <property type="match status" value="1"/>
</dbReference>
<dbReference type="FunFam" id="3.30.930.10:FF:000037">
    <property type="entry name" value="Proline--tRNA ligase"/>
    <property type="match status" value="1"/>
</dbReference>
<dbReference type="Gene3D" id="3.40.50.800">
    <property type="entry name" value="Anticodon-binding domain"/>
    <property type="match status" value="1"/>
</dbReference>
<dbReference type="Gene3D" id="3.30.930.10">
    <property type="entry name" value="Bira Bifunctional Protein, Domain 2"/>
    <property type="match status" value="1"/>
</dbReference>
<dbReference type="Gene3D" id="3.30.110.30">
    <property type="entry name" value="C-terminal domain of ProRS"/>
    <property type="match status" value="1"/>
</dbReference>
<dbReference type="HAMAP" id="MF_01571">
    <property type="entry name" value="Pro_tRNA_synth_type3"/>
    <property type="match status" value="1"/>
</dbReference>
<dbReference type="InterPro" id="IPR002314">
    <property type="entry name" value="aa-tRNA-synt_IIb"/>
</dbReference>
<dbReference type="InterPro" id="IPR006195">
    <property type="entry name" value="aa-tRNA-synth_II"/>
</dbReference>
<dbReference type="InterPro" id="IPR045864">
    <property type="entry name" value="aa-tRNA-synth_II/BPL/LPL"/>
</dbReference>
<dbReference type="InterPro" id="IPR004154">
    <property type="entry name" value="Anticodon-bd"/>
</dbReference>
<dbReference type="InterPro" id="IPR036621">
    <property type="entry name" value="Anticodon-bd_dom_sf"/>
</dbReference>
<dbReference type="InterPro" id="IPR002316">
    <property type="entry name" value="Pro-tRNA-ligase_IIa"/>
</dbReference>
<dbReference type="InterPro" id="IPR004499">
    <property type="entry name" value="Pro-tRNA-ligase_IIa_arc-type"/>
</dbReference>
<dbReference type="InterPro" id="IPR016061">
    <property type="entry name" value="Pro-tRNA_ligase_II_C"/>
</dbReference>
<dbReference type="InterPro" id="IPR017449">
    <property type="entry name" value="Pro-tRNA_synth_II"/>
</dbReference>
<dbReference type="InterPro" id="IPR033721">
    <property type="entry name" value="ProRS_core_arch_euk"/>
</dbReference>
<dbReference type="NCBIfam" id="TIGR00408">
    <property type="entry name" value="proS_fam_I"/>
    <property type="match status" value="1"/>
</dbReference>
<dbReference type="PANTHER" id="PTHR43382:SF2">
    <property type="entry name" value="BIFUNCTIONAL GLUTAMATE_PROLINE--TRNA LIGASE"/>
    <property type="match status" value="1"/>
</dbReference>
<dbReference type="PANTHER" id="PTHR43382">
    <property type="entry name" value="PROLYL-TRNA SYNTHETASE"/>
    <property type="match status" value="1"/>
</dbReference>
<dbReference type="Pfam" id="PF03129">
    <property type="entry name" value="HGTP_anticodon"/>
    <property type="match status" value="1"/>
</dbReference>
<dbReference type="Pfam" id="PF09180">
    <property type="entry name" value="ProRS-C_1"/>
    <property type="match status" value="1"/>
</dbReference>
<dbReference type="Pfam" id="PF00587">
    <property type="entry name" value="tRNA-synt_2b"/>
    <property type="match status" value="1"/>
</dbReference>
<dbReference type="PRINTS" id="PR01046">
    <property type="entry name" value="TRNASYNTHPRO"/>
</dbReference>
<dbReference type="SMART" id="SM00946">
    <property type="entry name" value="ProRS-C_1"/>
    <property type="match status" value="1"/>
</dbReference>
<dbReference type="SUPFAM" id="SSF64586">
    <property type="entry name" value="C-terminal domain of ProRS"/>
    <property type="match status" value="1"/>
</dbReference>
<dbReference type="SUPFAM" id="SSF52954">
    <property type="entry name" value="Class II aaRS ABD-related"/>
    <property type="match status" value="1"/>
</dbReference>
<dbReference type="SUPFAM" id="SSF55681">
    <property type="entry name" value="Class II aaRS and biotin synthetases"/>
    <property type="match status" value="1"/>
</dbReference>
<dbReference type="PROSITE" id="PS50862">
    <property type="entry name" value="AA_TRNA_LIGASE_II"/>
    <property type="match status" value="1"/>
</dbReference>
<protein>
    <recommendedName>
        <fullName evidence="1">Proline--tRNA ligase</fullName>
        <ecNumber evidence="1">6.1.1.15</ecNumber>
    </recommendedName>
    <alternativeName>
        <fullName evidence="1">Prolyl-tRNA synthetase</fullName>
        <shortName evidence="1">ProRS</shortName>
    </alternativeName>
</protein>
<evidence type="ECO:0000255" key="1">
    <source>
        <dbReference type="HAMAP-Rule" id="MF_01571"/>
    </source>
</evidence>
<reference key="1">
    <citation type="journal article" date="2005" name="Genome Res.">
        <title>Complete genome sequence of the hyperthermophilic archaeon Thermococcus kodakaraensis KOD1 and comparison with Pyrococcus genomes.</title>
        <authorList>
            <person name="Fukui T."/>
            <person name="Atomi H."/>
            <person name="Kanai T."/>
            <person name="Matsumi R."/>
            <person name="Fujiwara S."/>
            <person name="Imanaka T."/>
        </authorList>
    </citation>
    <scope>NUCLEOTIDE SEQUENCE [LARGE SCALE GENOMIC DNA]</scope>
    <source>
        <strain>ATCC BAA-918 / JCM 12380 / KOD1</strain>
    </source>
</reference>
<accession>Q5JF49</accession>
<feature type="chain" id="PRO_0000249172" description="Proline--tRNA ligase">
    <location>
        <begin position="1"/>
        <end position="481"/>
    </location>
</feature>
<proteinExistence type="inferred from homology"/>
<name>SYP_THEKO</name>
<gene>
    <name evidence="1" type="primary">proS</name>
    <name type="ordered locus">TK0550</name>
</gene>